<sequence length="1420" mass="158450">MKDLFKFFKTHSNGKIEEFNTIKIQLASPDMIRSWSFGEVKKPETINYRTFKPERDGLFCSRIFGPIKDYECLCGKYKRLKHRGVVCEKCGVEVTQSKVRRERMGHIELASPTAHIWFLKSLPSRIGLLLDMPLRDIERVLYFESYVVVEGGMTSLECRQILTEEEYLDALEEFGDEFEAKMGAEAIQILLKNMDLKNECECLRAFLEDSHSETKRKKVSKRIKLIESFILSNNKPEWMILNVLPVLPPDLRPLVPLDGGRFATSDLNDLYRRVINRNNRLKRLLDLSAPEIIVRNEKRMLQEAVDALLDNGRRGRAITGANKRPLKSLADMIKGKQGRFRQNLLGKRVDYSGRSVITVGPYLKLHQCGLPKKMALELFKPFIYGQLELKGLASTIKAAKKMVDREESVVWDILEDVIKEHPVMLNRAPTLHRLGIQAFEPILIEGKAIQLHPLVCAAYNADFDGDQMAVHVPLTLEAQLEARALMMSTNNILSPANGEPIIVPSQDVVLGLYYMTRDRINSKGEGMVLSNPKEAERLYRLGIAELHARVKVRITEYKLDNHGRWVDKINFVNSTIGRAIFWMIVPKGLSFDLVNKVLGKKSISMMLNHCYRVLGLQSTVMFADQIMYTGFTYAARSGASVGIDDMIIPTKKVDIIDAAESEVAEIQEQFQTGLVTAGERYNKVIDIWASANERVSKAMMDNLATETVINSHGLLETQASFNNIFMMADSGARGSAAQIRQLAGMRGLMAKPDGSIIETPITANFREGLNVLQYFISTHGARKGLADTALKTANSGYLTRRLVDVAQDLVITQDDCNTFAGIVMSAIIEGGDVKESLRERVLGRVLAEDILKSSNDSDVSNSEVLIKRNILLDEFYCDILDEYLIDVVKVRSVVTCDTDFGVCAKCYGRDLARGKLVNKGEAIGVIAAQSIGEPGTQLTMRTFHIGGAASRVASESSIQIKNQGIVRLKNVKAVINGQGKLVITSRHAELKIVDQFDRAKESYKIPYGSIVMKKDGELAVSGEIVAYWDPHTMPVIAEVSGFVKFIDMVDGQSVIHQTDDLTGLTSIVVLDTSERVSSAKDLRPTLKIIDVNGYDIFIPGTDISAQYFLPGKSVIQLVDGSRIISGDVLARLPHETSGTKDITGGLPRVADLFEARRPKEAAILAEISGVISFGKETKGKRRLMICSTDENGGENIYEEMIPKWRHLNVFEGEYVERGDVISDGPESPHDILRLRGVHAVTNYIVNEVQEVYRLQGVKINDKHIEVIIRQMLRKAIVIRSGDSDFLAGEQVEYARIKIVNQTLEREGKVKVSFVRNLLGITKASLATESFISAASFQETTRVLTESSVAGKKDDLRGLKENVIVGRLIPAGTGYAYHQKRILKRYSESYSDSKLKENLIETIPVTADEASANLTELLNAT</sequence>
<comment type="function">
    <text evidence="1">DNA-dependent RNA polymerase catalyzes the transcription of DNA into RNA using the four ribonucleoside triphosphates as substrates.</text>
</comment>
<comment type="catalytic activity">
    <reaction evidence="1">
        <text>RNA(n) + a ribonucleoside 5'-triphosphate = RNA(n+1) + diphosphate</text>
        <dbReference type="Rhea" id="RHEA:21248"/>
        <dbReference type="Rhea" id="RHEA-COMP:14527"/>
        <dbReference type="Rhea" id="RHEA-COMP:17342"/>
        <dbReference type="ChEBI" id="CHEBI:33019"/>
        <dbReference type="ChEBI" id="CHEBI:61557"/>
        <dbReference type="ChEBI" id="CHEBI:140395"/>
        <dbReference type="EC" id="2.7.7.6"/>
    </reaction>
</comment>
<comment type="cofactor">
    <cofactor evidence="1">
        <name>Mg(2+)</name>
        <dbReference type="ChEBI" id="CHEBI:18420"/>
    </cofactor>
    <text evidence="1">Binds 1 Mg(2+) ion per subunit.</text>
</comment>
<comment type="cofactor">
    <cofactor evidence="1">
        <name>Zn(2+)</name>
        <dbReference type="ChEBI" id="CHEBI:29105"/>
    </cofactor>
    <text evidence="1">Binds 2 Zn(2+) ions per subunit.</text>
</comment>
<comment type="subunit">
    <text evidence="1">The RNAP catalytic core consists of 2 alpha, 1 beta, 1 beta' and 1 omega subunit. When a sigma factor is associated with the core the holoenzyme is formed, which can initiate transcription.</text>
</comment>
<comment type="similarity">
    <text evidence="1">Belongs to the RNA polymerase beta' chain family.</text>
</comment>
<organism>
    <name type="scientific">Blochmanniella floridana</name>
    <dbReference type="NCBI Taxonomy" id="203907"/>
    <lineage>
        <taxon>Bacteria</taxon>
        <taxon>Pseudomonadati</taxon>
        <taxon>Pseudomonadota</taxon>
        <taxon>Gammaproteobacteria</taxon>
        <taxon>Enterobacterales</taxon>
        <taxon>Enterobacteriaceae</taxon>
        <taxon>ant endosymbionts</taxon>
        <taxon>Candidatus Blochmanniella</taxon>
    </lineage>
</organism>
<dbReference type="EC" id="2.7.7.6" evidence="1"/>
<dbReference type="EMBL" id="BX248583">
    <property type="protein sequence ID" value="CAD83238.1"/>
    <property type="molecule type" value="Genomic_DNA"/>
</dbReference>
<dbReference type="SMR" id="Q7VRP8"/>
<dbReference type="STRING" id="203907.Bfl556"/>
<dbReference type="KEGG" id="bfl:Bfl556"/>
<dbReference type="eggNOG" id="COG0086">
    <property type="taxonomic scope" value="Bacteria"/>
</dbReference>
<dbReference type="HOGENOM" id="CLU_000524_3_1_6"/>
<dbReference type="OrthoDB" id="9815296at2"/>
<dbReference type="Proteomes" id="UP000002192">
    <property type="component" value="Chromosome"/>
</dbReference>
<dbReference type="GO" id="GO:0000428">
    <property type="term" value="C:DNA-directed RNA polymerase complex"/>
    <property type="evidence" value="ECO:0007669"/>
    <property type="project" value="UniProtKB-KW"/>
</dbReference>
<dbReference type="GO" id="GO:0003677">
    <property type="term" value="F:DNA binding"/>
    <property type="evidence" value="ECO:0007669"/>
    <property type="project" value="UniProtKB-UniRule"/>
</dbReference>
<dbReference type="GO" id="GO:0003899">
    <property type="term" value="F:DNA-directed RNA polymerase activity"/>
    <property type="evidence" value="ECO:0007669"/>
    <property type="project" value="UniProtKB-UniRule"/>
</dbReference>
<dbReference type="GO" id="GO:0000287">
    <property type="term" value="F:magnesium ion binding"/>
    <property type="evidence" value="ECO:0007669"/>
    <property type="project" value="UniProtKB-UniRule"/>
</dbReference>
<dbReference type="GO" id="GO:0008270">
    <property type="term" value="F:zinc ion binding"/>
    <property type="evidence" value="ECO:0007669"/>
    <property type="project" value="UniProtKB-UniRule"/>
</dbReference>
<dbReference type="GO" id="GO:0006351">
    <property type="term" value="P:DNA-templated transcription"/>
    <property type="evidence" value="ECO:0007669"/>
    <property type="project" value="UniProtKB-UniRule"/>
</dbReference>
<dbReference type="CDD" id="cd02655">
    <property type="entry name" value="RNAP_beta'_C"/>
    <property type="match status" value="1"/>
</dbReference>
<dbReference type="CDD" id="cd01609">
    <property type="entry name" value="RNAP_beta'_N"/>
    <property type="match status" value="1"/>
</dbReference>
<dbReference type="FunFam" id="1.10.132.30:FF:000003">
    <property type="entry name" value="DNA-directed RNA polymerase subunit beta"/>
    <property type="match status" value="1"/>
</dbReference>
<dbReference type="FunFam" id="1.10.150.390:FF:000002">
    <property type="entry name" value="DNA-directed RNA polymerase subunit beta"/>
    <property type="match status" value="1"/>
</dbReference>
<dbReference type="FunFam" id="1.10.40.90:FF:000001">
    <property type="entry name" value="DNA-directed RNA polymerase subunit beta"/>
    <property type="match status" value="1"/>
</dbReference>
<dbReference type="FunFam" id="4.10.860.120:FF:000001">
    <property type="entry name" value="DNA-directed RNA polymerase subunit beta"/>
    <property type="match status" value="1"/>
</dbReference>
<dbReference type="Gene3D" id="1.10.132.30">
    <property type="match status" value="1"/>
</dbReference>
<dbReference type="Gene3D" id="1.10.150.390">
    <property type="match status" value="1"/>
</dbReference>
<dbReference type="Gene3D" id="1.10.1790.20">
    <property type="match status" value="1"/>
</dbReference>
<dbReference type="Gene3D" id="1.10.40.90">
    <property type="match status" value="1"/>
</dbReference>
<dbReference type="Gene3D" id="2.40.40.20">
    <property type="match status" value="1"/>
</dbReference>
<dbReference type="Gene3D" id="2.40.50.100">
    <property type="match status" value="3"/>
</dbReference>
<dbReference type="Gene3D" id="4.10.860.120">
    <property type="entry name" value="RNA polymerase II, clamp domain"/>
    <property type="match status" value="1"/>
</dbReference>
<dbReference type="Gene3D" id="1.10.274.100">
    <property type="entry name" value="RNA polymerase Rpb1, domain 3"/>
    <property type="match status" value="1"/>
</dbReference>
<dbReference type="HAMAP" id="MF_01322">
    <property type="entry name" value="RNApol_bact_RpoC"/>
    <property type="match status" value="1"/>
</dbReference>
<dbReference type="InterPro" id="IPR045867">
    <property type="entry name" value="DNA-dir_RpoC_beta_prime"/>
</dbReference>
<dbReference type="InterPro" id="IPR012754">
    <property type="entry name" value="DNA-dir_RpoC_beta_prime_bact"/>
</dbReference>
<dbReference type="InterPro" id="IPR000722">
    <property type="entry name" value="RNA_pol_asu"/>
</dbReference>
<dbReference type="InterPro" id="IPR006592">
    <property type="entry name" value="RNA_pol_N"/>
</dbReference>
<dbReference type="InterPro" id="IPR007080">
    <property type="entry name" value="RNA_pol_Rpb1_1"/>
</dbReference>
<dbReference type="InterPro" id="IPR007066">
    <property type="entry name" value="RNA_pol_Rpb1_3"/>
</dbReference>
<dbReference type="InterPro" id="IPR042102">
    <property type="entry name" value="RNA_pol_Rpb1_3_sf"/>
</dbReference>
<dbReference type="InterPro" id="IPR007083">
    <property type="entry name" value="RNA_pol_Rpb1_4"/>
</dbReference>
<dbReference type="InterPro" id="IPR007081">
    <property type="entry name" value="RNA_pol_Rpb1_5"/>
</dbReference>
<dbReference type="InterPro" id="IPR044893">
    <property type="entry name" value="RNA_pol_Rpb1_clamp_domain"/>
</dbReference>
<dbReference type="InterPro" id="IPR038120">
    <property type="entry name" value="Rpb1_funnel_sf"/>
</dbReference>
<dbReference type="NCBIfam" id="TIGR02386">
    <property type="entry name" value="rpoC_TIGR"/>
    <property type="match status" value="1"/>
</dbReference>
<dbReference type="PANTHER" id="PTHR19376">
    <property type="entry name" value="DNA-DIRECTED RNA POLYMERASE"/>
    <property type="match status" value="1"/>
</dbReference>
<dbReference type="PANTHER" id="PTHR19376:SF54">
    <property type="entry name" value="DNA-DIRECTED RNA POLYMERASE SUBUNIT BETA"/>
    <property type="match status" value="1"/>
</dbReference>
<dbReference type="Pfam" id="PF04997">
    <property type="entry name" value="RNA_pol_Rpb1_1"/>
    <property type="match status" value="1"/>
</dbReference>
<dbReference type="Pfam" id="PF00623">
    <property type="entry name" value="RNA_pol_Rpb1_2"/>
    <property type="match status" value="1"/>
</dbReference>
<dbReference type="Pfam" id="PF04983">
    <property type="entry name" value="RNA_pol_Rpb1_3"/>
    <property type="match status" value="1"/>
</dbReference>
<dbReference type="Pfam" id="PF05000">
    <property type="entry name" value="RNA_pol_Rpb1_4"/>
    <property type="match status" value="1"/>
</dbReference>
<dbReference type="Pfam" id="PF04998">
    <property type="entry name" value="RNA_pol_Rpb1_5"/>
    <property type="match status" value="1"/>
</dbReference>
<dbReference type="SMART" id="SM00663">
    <property type="entry name" value="RPOLA_N"/>
    <property type="match status" value="1"/>
</dbReference>
<dbReference type="SUPFAM" id="SSF64484">
    <property type="entry name" value="beta and beta-prime subunits of DNA dependent RNA-polymerase"/>
    <property type="match status" value="1"/>
</dbReference>
<reference key="1">
    <citation type="journal article" date="2003" name="Proc. Natl. Acad. Sci. U.S.A.">
        <title>The genome sequence of Blochmannia floridanus: comparative analysis of reduced genomes.</title>
        <authorList>
            <person name="Gil R."/>
            <person name="Silva F.J."/>
            <person name="Zientz E."/>
            <person name="Delmotte F."/>
            <person name="Gonzalez-Candelas F."/>
            <person name="Latorre A."/>
            <person name="Rausell C."/>
            <person name="Kamerbeek J."/>
            <person name="Gadau J."/>
            <person name="Hoelldobler B."/>
            <person name="van Ham R.C.H.J."/>
            <person name="Gross R."/>
            <person name="Moya A."/>
        </authorList>
    </citation>
    <scope>NUCLEOTIDE SEQUENCE [LARGE SCALE GENOMIC DNA]</scope>
</reference>
<gene>
    <name evidence="1" type="primary">rpoC</name>
    <name type="ordered locus">Bfl556</name>
</gene>
<accession>Q7VRP8</accession>
<name>RPOC_BLOFL</name>
<feature type="chain" id="PRO_0000067724" description="DNA-directed RNA polymerase subunit beta'">
    <location>
        <begin position="1"/>
        <end position="1420"/>
    </location>
</feature>
<feature type="binding site" evidence="1">
    <location>
        <position position="72"/>
    </location>
    <ligand>
        <name>Zn(2+)</name>
        <dbReference type="ChEBI" id="CHEBI:29105"/>
        <label>1</label>
    </ligand>
</feature>
<feature type="binding site" evidence="1">
    <location>
        <position position="74"/>
    </location>
    <ligand>
        <name>Zn(2+)</name>
        <dbReference type="ChEBI" id="CHEBI:29105"/>
        <label>1</label>
    </ligand>
</feature>
<feature type="binding site" evidence="1">
    <location>
        <position position="87"/>
    </location>
    <ligand>
        <name>Zn(2+)</name>
        <dbReference type="ChEBI" id="CHEBI:29105"/>
        <label>1</label>
    </ligand>
</feature>
<feature type="binding site" evidence="1">
    <location>
        <position position="90"/>
    </location>
    <ligand>
        <name>Zn(2+)</name>
        <dbReference type="ChEBI" id="CHEBI:29105"/>
        <label>1</label>
    </ligand>
</feature>
<feature type="binding site" evidence="1">
    <location>
        <position position="462"/>
    </location>
    <ligand>
        <name>Mg(2+)</name>
        <dbReference type="ChEBI" id="CHEBI:18420"/>
    </ligand>
</feature>
<feature type="binding site" evidence="1">
    <location>
        <position position="464"/>
    </location>
    <ligand>
        <name>Mg(2+)</name>
        <dbReference type="ChEBI" id="CHEBI:18420"/>
    </ligand>
</feature>
<feature type="binding site" evidence="1">
    <location>
        <position position="466"/>
    </location>
    <ligand>
        <name>Mg(2+)</name>
        <dbReference type="ChEBI" id="CHEBI:18420"/>
    </ligand>
</feature>
<feature type="binding site" evidence="1">
    <location>
        <position position="816"/>
    </location>
    <ligand>
        <name>Zn(2+)</name>
        <dbReference type="ChEBI" id="CHEBI:29105"/>
        <label>2</label>
    </ligand>
</feature>
<feature type="binding site" evidence="1">
    <location>
        <position position="896"/>
    </location>
    <ligand>
        <name>Zn(2+)</name>
        <dbReference type="ChEBI" id="CHEBI:29105"/>
        <label>2</label>
    </ligand>
</feature>
<feature type="binding site" evidence="1">
    <location>
        <position position="903"/>
    </location>
    <ligand>
        <name>Zn(2+)</name>
        <dbReference type="ChEBI" id="CHEBI:29105"/>
        <label>2</label>
    </ligand>
</feature>
<feature type="binding site" evidence="1">
    <location>
        <position position="906"/>
    </location>
    <ligand>
        <name>Zn(2+)</name>
        <dbReference type="ChEBI" id="CHEBI:29105"/>
        <label>2</label>
    </ligand>
</feature>
<proteinExistence type="inferred from homology"/>
<protein>
    <recommendedName>
        <fullName evidence="1">DNA-directed RNA polymerase subunit beta'</fullName>
        <shortName evidence="1">RNAP subunit beta'</shortName>
        <ecNumber evidence="1">2.7.7.6</ecNumber>
    </recommendedName>
    <alternativeName>
        <fullName evidence="1">RNA polymerase subunit beta'</fullName>
    </alternativeName>
    <alternativeName>
        <fullName evidence="1">Transcriptase subunit beta'</fullName>
    </alternativeName>
</protein>
<keyword id="KW-0240">DNA-directed RNA polymerase</keyword>
<keyword id="KW-0460">Magnesium</keyword>
<keyword id="KW-0479">Metal-binding</keyword>
<keyword id="KW-0548">Nucleotidyltransferase</keyword>
<keyword id="KW-1185">Reference proteome</keyword>
<keyword id="KW-0804">Transcription</keyword>
<keyword id="KW-0808">Transferase</keyword>
<keyword id="KW-0862">Zinc</keyword>
<evidence type="ECO:0000255" key="1">
    <source>
        <dbReference type="HAMAP-Rule" id="MF_01322"/>
    </source>
</evidence>